<protein>
    <recommendedName>
        <fullName evidence="1">Ketol-acid reductoisomerase (NADP(+))</fullName>
        <shortName evidence="1">KARI</shortName>
        <ecNumber evidence="1">1.1.1.86</ecNumber>
    </recommendedName>
    <alternativeName>
        <fullName evidence="1">Acetohydroxy-acid isomeroreductase</fullName>
        <shortName evidence="1">AHIR</shortName>
    </alternativeName>
    <alternativeName>
        <fullName evidence="1">Alpha-keto-beta-hydroxylacyl reductoisomerase</fullName>
    </alternativeName>
    <alternativeName>
        <fullName evidence="1">Ketol-acid reductoisomerase type 1</fullName>
    </alternativeName>
    <alternativeName>
        <fullName evidence="1">Ketol-acid reductoisomerase type I</fullName>
    </alternativeName>
</protein>
<keyword id="KW-0028">Amino-acid biosynthesis</keyword>
<keyword id="KW-0100">Branched-chain amino acid biosynthesis</keyword>
<keyword id="KW-0460">Magnesium</keyword>
<keyword id="KW-0479">Metal-binding</keyword>
<keyword id="KW-0521">NADP</keyword>
<keyword id="KW-0560">Oxidoreductase</keyword>
<keyword id="KW-1185">Reference proteome</keyword>
<dbReference type="EC" id="1.1.1.86" evidence="1"/>
<dbReference type="EMBL" id="AP006627">
    <property type="protein sequence ID" value="BAD65178.1"/>
    <property type="molecule type" value="Genomic_DNA"/>
</dbReference>
<dbReference type="RefSeq" id="WP_011247486.1">
    <property type="nucleotide sequence ID" value="NC_006582.1"/>
</dbReference>
<dbReference type="SMR" id="Q5WEN2"/>
<dbReference type="STRING" id="66692.ABC2643"/>
<dbReference type="GeneID" id="86926878"/>
<dbReference type="KEGG" id="bcl:ABC2643"/>
<dbReference type="eggNOG" id="COG0059">
    <property type="taxonomic scope" value="Bacteria"/>
</dbReference>
<dbReference type="HOGENOM" id="CLU_033821_0_1_9"/>
<dbReference type="OrthoDB" id="9804088at2"/>
<dbReference type="UniPathway" id="UPA00047">
    <property type="reaction ID" value="UER00056"/>
</dbReference>
<dbReference type="UniPathway" id="UPA00049">
    <property type="reaction ID" value="UER00060"/>
</dbReference>
<dbReference type="Proteomes" id="UP000001168">
    <property type="component" value="Chromosome"/>
</dbReference>
<dbReference type="GO" id="GO:0005829">
    <property type="term" value="C:cytosol"/>
    <property type="evidence" value="ECO:0007669"/>
    <property type="project" value="TreeGrafter"/>
</dbReference>
<dbReference type="GO" id="GO:0004455">
    <property type="term" value="F:ketol-acid reductoisomerase activity"/>
    <property type="evidence" value="ECO:0007669"/>
    <property type="project" value="UniProtKB-UniRule"/>
</dbReference>
<dbReference type="GO" id="GO:0000287">
    <property type="term" value="F:magnesium ion binding"/>
    <property type="evidence" value="ECO:0007669"/>
    <property type="project" value="UniProtKB-UniRule"/>
</dbReference>
<dbReference type="GO" id="GO:0050661">
    <property type="term" value="F:NADP binding"/>
    <property type="evidence" value="ECO:0007669"/>
    <property type="project" value="InterPro"/>
</dbReference>
<dbReference type="GO" id="GO:0009097">
    <property type="term" value="P:isoleucine biosynthetic process"/>
    <property type="evidence" value="ECO:0007669"/>
    <property type="project" value="UniProtKB-UniRule"/>
</dbReference>
<dbReference type="GO" id="GO:0009099">
    <property type="term" value="P:L-valine biosynthetic process"/>
    <property type="evidence" value="ECO:0007669"/>
    <property type="project" value="UniProtKB-UniRule"/>
</dbReference>
<dbReference type="FunFam" id="3.40.50.720:FF:000023">
    <property type="entry name" value="Ketol-acid reductoisomerase (NADP(+))"/>
    <property type="match status" value="1"/>
</dbReference>
<dbReference type="Gene3D" id="6.10.240.10">
    <property type="match status" value="1"/>
</dbReference>
<dbReference type="Gene3D" id="3.40.50.720">
    <property type="entry name" value="NAD(P)-binding Rossmann-like Domain"/>
    <property type="match status" value="1"/>
</dbReference>
<dbReference type="HAMAP" id="MF_00435">
    <property type="entry name" value="IlvC"/>
    <property type="match status" value="1"/>
</dbReference>
<dbReference type="InterPro" id="IPR008927">
    <property type="entry name" value="6-PGluconate_DH-like_C_sf"/>
</dbReference>
<dbReference type="InterPro" id="IPR013023">
    <property type="entry name" value="KARI"/>
</dbReference>
<dbReference type="InterPro" id="IPR000506">
    <property type="entry name" value="KARI_C"/>
</dbReference>
<dbReference type="InterPro" id="IPR013116">
    <property type="entry name" value="KARI_N"/>
</dbReference>
<dbReference type="InterPro" id="IPR014359">
    <property type="entry name" value="KARI_prok"/>
</dbReference>
<dbReference type="InterPro" id="IPR036291">
    <property type="entry name" value="NAD(P)-bd_dom_sf"/>
</dbReference>
<dbReference type="NCBIfam" id="TIGR00465">
    <property type="entry name" value="ilvC"/>
    <property type="match status" value="1"/>
</dbReference>
<dbReference type="NCBIfam" id="NF004017">
    <property type="entry name" value="PRK05479.1"/>
    <property type="match status" value="1"/>
</dbReference>
<dbReference type="NCBIfam" id="NF009940">
    <property type="entry name" value="PRK13403.1"/>
    <property type="match status" value="1"/>
</dbReference>
<dbReference type="PANTHER" id="PTHR21371">
    <property type="entry name" value="KETOL-ACID REDUCTOISOMERASE, MITOCHONDRIAL"/>
    <property type="match status" value="1"/>
</dbReference>
<dbReference type="PANTHER" id="PTHR21371:SF1">
    <property type="entry name" value="KETOL-ACID REDUCTOISOMERASE, MITOCHONDRIAL"/>
    <property type="match status" value="1"/>
</dbReference>
<dbReference type="Pfam" id="PF01450">
    <property type="entry name" value="KARI_C"/>
    <property type="match status" value="1"/>
</dbReference>
<dbReference type="Pfam" id="PF07991">
    <property type="entry name" value="KARI_N"/>
    <property type="match status" value="1"/>
</dbReference>
<dbReference type="PIRSF" id="PIRSF000116">
    <property type="entry name" value="IlvC_gammaproteo"/>
    <property type="match status" value="1"/>
</dbReference>
<dbReference type="SUPFAM" id="SSF48179">
    <property type="entry name" value="6-phosphogluconate dehydrogenase C-terminal domain-like"/>
    <property type="match status" value="1"/>
</dbReference>
<dbReference type="SUPFAM" id="SSF51735">
    <property type="entry name" value="NAD(P)-binding Rossmann-fold domains"/>
    <property type="match status" value="1"/>
</dbReference>
<dbReference type="PROSITE" id="PS51851">
    <property type="entry name" value="KARI_C"/>
    <property type="match status" value="1"/>
</dbReference>
<dbReference type="PROSITE" id="PS51850">
    <property type="entry name" value="KARI_N"/>
    <property type="match status" value="1"/>
</dbReference>
<gene>
    <name evidence="1" type="primary">ilvC</name>
    <name type="ordered locus">ABC2643</name>
</gene>
<sequence>MAKVYYNGDVNEQVLEGKTVAIVGYGSQGHAHAQNLRESGVDVIIGLRPGKSWDKATEDGFSVYSVREASAKADIIMILSPDEHQPAIYKESIEPELTAGKALVFAHGFNIHFNQIVPPEHVDVFLAAPKGPGHLVRRTYTEGAGVPALIAVYQDATGQAKDIALAYAKQIGAARAGVLETTFKEETETDLFGEQAVLCGGTSALVKAGFETLVEAGYQPEIAYFECLHELKLIVDLMYEGGLEYMRYSISDTAQWGDFQAGPRIVTDETKAAMKEILSDIQKGKFAKGWILENKLNRPEYNAINEAEKNHPLEVVGRELREMMPFVKASKSKGVVANAKN</sequence>
<proteinExistence type="inferred from homology"/>
<feature type="chain" id="PRO_0000226157" description="Ketol-acid reductoisomerase (NADP(+))">
    <location>
        <begin position="1"/>
        <end position="341"/>
    </location>
</feature>
<feature type="domain" description="KARI N-terminal Rossmann" evidence="2">
    <location>
        <begin position="2"/>
        <end position="181"/>
    </location>
</feature>
<feature type="domain" description="KARI C-terminal knotted" evidence="3">
    <location>
        <begin position="182"/>
        <end position="327"/>
    </location>
</feature>
<feature type="active site" evidence="1">
    <location>
        <position position="107"/>
    </location>
</feature>
<feature type="binding site" evidence="1">
    <location>
        <begin position="25"/>
        <end position="28"/>
    </location>
    <ligand>
        <name>NADP(+)</name>
        <dbReference type="ChEBI" id="CHEBI:58349"/>
    </ligand>
</feature>
<feature type="binding site" evidence="1">
    <location>
        <position position="48"/>
    </location>
    <ligand>
        <name>NADP(+)</name>
        <dbReference type="ChEBI" id="CHEBI:58349"/>
    </ligand>
</feature>
<feature type="binding site" evidence="1">
    <location>
        <position position="52"/>
    </location>
    <ligand>
        <name>NADP(+)</name>
        <dbReference type="ChEBI" id="CHEBI:58349"/>
    </ligand>
</feature>
<feature type="binding site" evidence="1">
    <location>
        <begin position="82"/>
        <end position="85"/>
    </location>
    <ligand>
        <name>NADP(+)</name>
        <dbReference type="ChEBI" id="CHEBI:58349"/>
    </ligand>
</feature>
<feature type="binding site" evidence="1">
    <location>
        <position position="133"/>
    </location>
    <ligand>
        <name>NADP(+)</name>
        <dbReference type="ChEBI" id="CHEBI:58349"/>
    </ligand>
</feature>
<feature type="binding site" evidence="1">
    <location>
        <position position="190"/>
    </location>
    <ligand>
        <name>Mg(2+)</name>
        <dbReference type="ChEBI" id="CHEBI:18420"/>
        <label>1</label>
    </ligand>
</feature>
<feature type="binding site" evidence="1">
    <location>
        <position position="190"/>
    </location>
    <ligand>
        <name>Mg(2+)</name>
        <dbReference type="ChEBI" id="CHEBI:18420"/>
        <label>2</label>
    </ligand>
</feature>
<feature type="binding site" evidence="1">
    <location>
        <position position="194"/>
    </location>
    <ligand>
        <name>Mg(2+)</name>
        <dbReference type="ChEBI" id="CHEBI:18420"/>
        <label>1</label>
    </ligand>
</feature>
<feature type="binding site" evidence="1">
    <location>
        <position position="226"/>
    </location>
    <ligand>
        <name>Mg(2+)</name>
        <dbReference type="ChEBI" id="CHEBI:18420"/>
        <label>2</label>
    </ligand>
</feature>
<feature type="binding site" evidence="1">
    <location>
        <position position="230"/>
    </location>
    <ligand>
        <name>Mg(2+)</name>
        <dbReference type="ChEBI" id="CHEBI:18420"/>
        <label>2</label>
    </ligand>
</feature>
<feature type="binding site" evidence="1">
    <location>
        <position position="251"/>
    </location>
    <ligand>
        <name>substrate</name>
    </ligand>
</feature>
<evidence type="ECO:0000255" key="1">
    <source>
        <dbReference type="HAMAP-Rule" id="MF_00435"/>
    </source>
</evidence>
<evidence type="ECO:0000255" key="2">
    <source>
        <dbReference type="PROSITE-ProRule" id="PRU01197"/>
    </source>
</evidence>
<evidence type="ECO:0000255" key="3">
    <source>
        <dbReference type="PROSITE-ProRule" id="PRU01198"/>
    </source>
</evidence>
<organism>
    <name type="scientific">Shouchella clausii (strain KSM-K16)</name>
    <name type="common">Alkalihalobacillus clausii</name>
    <dbReference type="NCBI Taxonomy" id="66692"/>
    <lineage>
        <taxon>Bacteria</taxon>
        <taxon>Bacillati</taxon>
        <taxon>Bacillota</taxon>
        <taxon>Bacilli</taxon>
        <taxon>Bacillales</taxon>
        <taxon>Bacillaceae</taxon>
        <taxon>Shouchella</taxon>
    </lineage>
</organism>
<comment type="function">
    <text evidence="1">Involved in the biosynthesis of branched-chain amino acids (BCAA). Catalyzes an alkyl-migration followed by a ketol-acid reduction of (S)-2-acetolactate (S2AL) to yield (R)-2,3-dihydroxy-isovalerate. In the isomerase reaction, S2AL is rearranged via a Mg-dependent methyl migration to produce 3-hydroxy-3-methyl-2-ketobutyrate (HMKB). In the reductase reaction, this 2-ketoacid undergoes a metal-dependent reduction by NADPH to yield (R)-2,3-dihydroxy-isovalerate.</text>
</comment>
<comment type="catalytic activity">
    <reaction evidence="1">
        <text>(2R)-2,3-dihydroxy-3-methylbutanoate + NADP(+) = (2S)-2-acetolactate + NADPH + H(+)</text>
        <dbReference type="Rhea" id="RHEA:22068"/>
        <dbReference type="ChEBI" id="CHEBI:15378"/>
        <dbReference type="ChEBI" id="CHEBI:49072"/>
        <dbReference type="ChEBI" id="CHEBI:57783"/>
        <dbReference type="ChEBI" id="CHEBI:58349"/>
        <dbReference type="ChEBI" id="CHEBI:58476"/>
        <dbReference type="EC" id="1.1.1.86"/>
    </reaction>
</comment>
<comment type="catalytic activity">
    <reaction evidence="1">
        <text>(2R,3R)-2,3-dihydroxy-3-methylpentanoate + NADP(+) = (S)-2-ethyl-2-hydroxy-3-oxobutanoate + NADPH + H(+)</text>
        <dbReference type="Rhea" id="RHEA:13493"/>
        <dbReference type="ChEBI" id="CHEBI:15378"/>
        <dbReference type="ChEBI" id="CHEBI:49256"/>
        <dbReference type="ChEBI" id="CHEBI:49258"/>
        <dbReference type="ChEBI" id="CHEBI:57783"/>
        <dbReference type="ChEBI" id="CHEBI:58349"/>
        <dbReference type="EC" id="1.1.1.86"/>
    </reaction>
</comment>
<comment type="cofactor">
    <cofactor evidence="1">
        <name>Mg(2+)</name>
        <dbReference type="ChEBI" id="CHEBI:18420"/>
    </cofactor>
    <text evidence="1">Binds 2 magnesium ions per subunit.</text>
</comment>
<comment type="pathway">
    <text evidence="1">Amino-acid biosynthesis; L-isoleucine biosynthesis; L-isoleucine from 2-oxobutanoate: step 2/4.</text>
</comment>
<comment type="pathway">
    <text evidence="1">Amino-acid biosynthesis; L-valine biosynthesis; L-valine from pyruvate: step 2/4.</text>
</comment>
<comment type="similarity">
    <text evidence="1">Belongs to the ketol-acid reductoisomerase family.</text>
</comment>
<reference key="1">
    <citation type="submission" date="2003-10" db="EMBL/GenBank/DDBJ databases">
        <title>The complete genome sequence of the alkaliphilic Bacillus clausii KSM-K16.</title>
        <authorList>
            <person name="Takaki Y."/>
            <person name="Kageyama Y."/>
            <person name="Shimamura S."/>
            <person name="Suzuki H."/>
            <person name="Nishi S."/>
            <person name="Hatada Y."/>
            <person name="Kawai S."/>
            <person name="Ito S."/>
            <person name="Horikoshi K."/>
        </authorList>
    </citation>
    <scope>NUCLEOTIDE SEQUENCE [LARGE SCALE GENOMIC DNA]</scope>
    <source>
        <strain>KSM-K16</strain>
    </source>
</reference>
<accession>Q5WEN2</accession>
<name>ILVC_SHOC1</name>